<proteinExistence type="inferred from homology"/>
<keyword id="KW-1185">Reference proteome</keyword>
<keyword id="KW-0687">Ribonucleoprotein</keyword>
<keyword id="KW-0689">Ribosomal protein</keyword>
<name>RS2_LIMRD</name>
<comment type="similarity">
    <text evidence="1">Belongs to the universal ribosomal protein uS2 family.</text>
</comment>
<feature type="chain" id="PRO_1000059262" description="Small ribosomal subunit protein uS2">
    <location>
        <begin position="1"/>
        <end position="262"/>
    </location>
</feature>
<feature type="region of interest" description="Disordered" evidence="2">
    <location>
        <begin position="224"/>
        <end position="262"/>
    </location>
</feature>
<dbReference type="EMBL" id="CP000705">
    <property type="protein sequence ID" value="ABQ82949.1"/>
    <property type="molecule type" value="Genomic_DNA"/>
</dbReference>
<dbReference type="RefSeq" id="WP_003666860.1">
    <property type="nucleotide sequence ID" value="NZ_AZDD01000002.1"/>
</dbReference>
<dbReference type="SMR" id="A5VJC5"/>
<dbReference type="STRING" id="557436.Lreu_0684"/>
<dbReference type="GeneID" id="77190769"/>
<dbReference type="KEGG" id="lre:Lreu_0684"/>
<dbReference type="eggNOG" id="COG0052">
    <property type="taxonomic scope" value="Bacteria"/>
</dbReference>
<dbReference type="HOGENOM" id="CLU_040318_1_2_9"/>
<dbReference type="Proteomes" id="UP000001991">
    <property type="component" value="Chromosome"/>
</dbReference>
<dbReference type="GO" id="GO:0022627">
    <property type="term" value="C:cytosolic small ribosomal subunit"/>
    <property type="evidence" value="ECO:0007669"/>
    <property type="project" value="TreeGrafter"/>
</dbReference>
<dbReference type="GO" id="GO:0003735">
    <property type="term" value="F:structural constituent of ribosome"/>
    <property type="evidence" value="ECO:0007669"/>
    <property type="project" value="InterPro"/>
</dbReference>
<dbReference type="GO" id="GO:0006412">
    <property type="term" value="P:translation"/>
    <property type="evidence" value="ECO:0007669"/>
    <property type="project" value="UniProtKB-UniRule"/>
</dbReference>
<dbReference type="CDD" id="cd01425">
    <property type="entry name" value="RPS2"/>
    <property type="match status" value="1"/>
</dbReference>
<dbReference type="FunFam" id="1.10.287.610:FF:000001">
    <property type="entry name" value="30S ribosomal protein S2"/>
    <property type="match status" value="1"/>
</dbReference>
<dbReference type="Gene3D" id="3.40.50.10490">
    <property type="entry name" value="Glucose-6-phosphate isomerase like protein, domain 1"/>
    <property type="match status" value="1"/>
</dbReference>
<dbReference type="Gene3D" id="1.10.287.610">
    <property type="entry name" value="Helix hairpin bin"/>
    <property type="match status" value="1"/>
</dbReference>
<dbReference type="HAMAP" id="MF_00291_B">
    <property type="entry name" value="Ribosomal_uS2_B"/>
    <property type="match status" value="1"/>
</dbReference>
<dbReference type="InterPro" id="IPR001865">
    <property type="entry name" value="Ribosomal_uS2"/>
</dbReference>
<dbReference type="InterPro" id="IPR005706">
    <property type="entry name" value="Ribosomal_uS2_bac/mit/plastid"/>
</dbReference>
<dbReference type="InterPro" id="IPR018130">
    <property type="entry name" value="Ribosomal_uS2_CS"/>
</dbReference>
<dbReference type="InterPro" id="IPR023591">
    <property type="entry name" value="Ribosomal_uS2_flav_dom_sf"/>
</dbReference>
<dbReference type="NCBIfam" id="TIGR01011">
    <property type="entry name" value="rpsB_bact"/>
    <property type="match status" value="1"/>
</dbReference>
<dbReference type="PANTHER" id="PTHR12534">
    <property type="entry name" value="30S RIBOSOMAL PROTEIN S2 PROKARYOTIC AND ORGANELLAR"/>
    <property type="match status" value="1"/>
</dbReference>
<dbReference type="PANTHER" id="PTHR12534:SF0">
    <property type="entry name" value="SMALL RIBOSOMAL SUBUNIT PROTEIN US2M"/>
    <property type="match status" value="1"/>
</dbReference>
<dbReference type="Pfam" id="PF00318">
    <property type="entry name" value="Ribosomal_S2"/>
    <property type="match status" value="1"/>
</dbReference>
<dbReference type="PRINTS" id="PR00395">
    <property type="entry name" value="RIBOSOMALS2"/>
</dbReference>
<dbReference type="SUPFAM" id="SSF52313">
    <property type="entry name" value="Ribosomal protein S2"/>
    <property type="match status" value="1"/>
</dbReference>
<dbReference type="PROSITE" id="PS00962">
    <property type="entry name" value="RIBOSOMAL_S2_1"/>
    <property type="match status" value="1"/>
</dbReference>
<dbReference type="PROSITE" id="PS00963">
    <property type="entry name" value="RIBOSOMAL_S2_2"/>
    <property type="match status" value="1"/>
</dbReference>
<accession>A5VJC5</accession>
<reference key="1">
    <citation type="journal article" date="2011" name="PLoS Genet.">
        <title>The evolution of host specialization in the vertebrate gut symbiont Lactobacillus reuteri.</title>
        <authorList>
            <person name="Frese S.A."/>
            <person name="Benson A.K."/>
            <person name="Tannock G.W."/>
            <person name="Loach D.M."/>
            <person name="Kim J."/>
            <person name="Zhang M."/>
            <person name="Oh P.L."/>
            <person name="Heng N.C."/>
            <person name="Patil P.B."/>
            <person name="Juge N."/>
            <person name="Mackenzie D.A."/>
            <person name="Pearson B.M."/>
            <person name="Lapidus A."/>
            <person name="Dalin E."/>
            <person name="Tice H."/>
            <person name="Goltsman E."/>
            <person name="Land M."/>
            <person name="Hauser L."/>
            <person name="Ivanova N."/>
            <person name="Kyrpides N.C."/>
            <person name="Walter J."/>
        </authorList>
    </citation>
    <scope>NUCLEOTIDE SEQUENCE [LARGE SCALE GENOMIC DNA]</scope>
    <source>
        <strain>DSM 20016</strain>
    </source>
</reference>
<evidence type="ECO:0000255" key="1">
    <source>
        <dbReference type="HAMAP-Rule" id="MF_00291"/>
    </source>
</evidence>
<evidence type="ECO:0000256" key="2">
    <source>
        <dbReference type="SAM" id="MobiDB-lite"/>
    </source>
</evidence>
<evidence type="ECO:0000305" key="3"/>
<sequence>MSVVSMKQLLEAGVHFGHQTRRWNPKMEEYIFTERNGIYIIDLQKTVKLIDTAYNYMKDVAANDGVALFVGTKKQAQDAIEEEATRAGQYYVNHRWLGGTLTNWKTIQSRIARLKELKKMSEDGTFDVLPKKEVAVLTKQREKLERFLGGIEDMPRIPDVMFIVDPHKEQIAVKEAQKLHIPIVAMVDTNTDPDDIDYVIPSNDDAIRAVRLITSKMADAFVEGKQGQDDAQQETADDNAANETVSEDSLKNLKNSVEGKED</sequence>
<gene>
    <name evidence="1" type="primary">rpsB</name>
    <name type="ordered locus">Lreu_0684</name>
</gene>
<organism>
    <name type="scientific">Limosilactobacillus reuteri (strain DSM 20016)</name>
    <name type="common">Lactobacillus reuteri</name>
    <dbReference type="NCBI Taxonomy" id="557436"/>
    <lineage>
        <taxon>Bacteria</taxon>
        <taxon>Bacillati</taxon>
        <taxon>Bacillota</taxon>
        <taxon>Bacilli</taxon>
        <taxon>Lactobacillales</taxon>
        <taxon>Lactobacillaceae</taxon>
        <taxon>Limosilactobacillus</taxon>
    </lineage>
</organism>
<protein>
    <recommendedName>
        <fullName evidence="1">Small ribosomal subunit protein uS2</fullName>
    </recommendedName>
    <alternativeName>
        <fullName evidence="3">30S ribosomal protein S2</fullName>
    </alternativeName>
</protein>